<feature type="chain" id="PRO_0000064369" description="SH3 domain-binding protein 5">
    <location>
        <begin position="1"/>
        <end position="463"/>
    </location>
</feature>
<feature type="region of interest" description="Disordered" evidence="3">
    <location>
        <begin position="1"/>
        <end position="69"/>
    </location>
</feature>
<feature type="region of interest" description="Sufficient for interaction with RAB11A and for guanine nucleotide exchange activity" evidence="1">
    <location>
        <begin position="33"/>
        <end position="268"/>
    </location>
</feature>
<feature type="region of interest" description="Disordered" evidence="3">
    <location>
        <begin position="309"/>
        <end position="348"/>
    </location>
</feature>
<feature type="region of interest" description="Disordered" evidence="3">
    <location>
        <begin position="372"/>
        <end position="429"/>
    </location>
</feature>
<feature type="coiled-coil region" evidence="1">
    <location>
        <begin position="47"/>
        <end position="93"/>
    </location>
</feature>
<feature type="coiled-coil region" evidence="1">
    <location>
        <begin position="100"/>
        <end position="148"/>
    </location>
</feature>
<feature type="coiled-coil region" evidence="1">
    <location>
        <begin position="157"/>
        <end position="203"/>
    </location>
</feature>
<feature type="coiled-coil region" evidence="1">
    <location>
        <begin position="214"/>
        <end position="258"/>
    </location>
</feature>
<feature type="compositionally biased region" description="Basic and acidic residues" evidence="3">
    <location>
        <begin position="1"/>
        <end position="12"/>
    </location>
</feature>
<feature type="compositionally biased region" description="Acidic residues" evidence="3">
    <location>
        <begin position="25"/>
        <end position="44"/>
    </location>
</feature>
<feature type="compositionally biased region" description="Basic and acidic residues" evidence="3">
    <location>
        <begin position="45"/>
        <end position="54"/>
    </location>
</feature>
<feature type="compositionally biased region" description="Acidic residues" evidence="3">
    <location>
        <begin position="309"/>
        <end position="320"/>
    </location>
</feature>
<feature type="compositionally biased region" description="Low complexity" evidence="3">
    <location>
        <begin position="323"/>
        <end position="335"/>
    </location>
</feature>
<feature type="compositionally biased region" description="Basic and acidic residues" evidence="3">
    <location>
        <begin position="383"/>
        <end position="399"/>
    </location>
</feature>
<feature type="compositionally biased region" description="Low complexity" evidence="3">
    <location>
        <begin position="416"/>
        <end position="428"/>
    </location>
</feature>
<feature type="modified residue" description="Phosphoserine; by MAPK12 and MAPK9" evidence="2">
    <location>
        <position position="354"/>
    </location>
</feature>
<feature type="modified residue" description="Phosphoserine" evidence="10">
    <location>
        <position position="378"/>
    </location>
</feature>
<feature type="modified residue" description="Phosphoserine" evidence="10">
    <location>
        <position position="379"/>
    </location>
</feature>
<feature type="modified residue" description="Phosphoserine" evidence="2">
    <location>
        <position position="421"/>
    </location>
</feature>
<feature type="modified residue" description="Phosphoserine" evidence="10">
    <location>
        <position position="424"/>
    </location>
</feature>
<feature type="splice variant" id="VSP_022572" description="In isoform 3." evidence="9">
    <original>MDTALKRSRSDEPAELPPPAREVEEKEEEEERMEQGLEEEEEEVDPRIQGELEKLNQSTDDINRRETELE</original>
    <variation>MDWARTVMASTGLAPASAAPHTGSRAQPCLFLAPVPPHFAWFIFLDPALPCSTLAQSVSFKPCCGVVK</variation>
    <location>
        <begin position="1"/>
        <end position="70"/>
    </location>
</feature>
<feature type="splice variant" id="VSP_010882" description="In isoform 2 and isoform 3." evidence="6 7 8">
    <original>IFIFYTFLQ</original>
    <variation>VQIG</variation>
    <location>
        <begin position="455"/>
        <end position="463"/>
    </location>
</feature>
<feature type="sequence conflict" description="In Ref. 1; BAC31530." evidence="9" ref="1">
    <original>S</original>
    <variation>SS</variation>
    <location>
        <position position="299"/>
    </location>
</feature>
<proteinExistence type="evidence at protein level"/>
<dbReference type="EMBL" id="AK043375">
    <property type="protein sequence ID" value="BAC31530.1"/>
    <property type="status" value="ALT_INIT"/>
    <property type="molecule type" value="mRNA"/>
</dbReference>
<dbReference type="EMBL" id="AK161427">
    <property type="protein sequence ID" value="BAE36389.1"/>
    <property type="molecule type" value="mRNA"/>
</dbReference>
<dbReference type="EMBL" id="BC018237">
    <property type="protein sequence ID" value="AAH18237.2"/>
    <property type="molecule type" value="mRNA"/>
</dbReference>
<dbReference type="EMBL" id="BC053741">
    <property type="protein sequence ID" value="AAH53741.2"/>
    <property type="molecule type" value="mRNA"/>
</dbReference>
<dbReference type="EMBL" id="AB016835">
    <property type="protein sequence ID" value="BAA75641.1"/>
    <property type="molecule type" value="mRNA"/>
</dbReference>
<dbReference type="CCDS" id="CCDS36855.1">
    <molecule id="Q9Z131-2"/>
</dbReference>
<dbReference type="CCDS" id="CCDS84108.1">
    <molecule id="Q9Z131-3"/>
</dbReference>
<dbReference type="RefSeq" id="NP_001334514.1">
    <molecule id="Q9Z131-3"/>
    <property type="nucleotide sequence ID" value="NM_001347585.2"/>
</dbReference>
<dbReference type="RefSeq" id="NP_036024.2">
    <molecule id="Q9Z131-2"/>
    <property type="nucleotide sequence ID" value="NM_011894.4"/>
</dbReference>
<dbReference type="SMR" id="Q9Z131"/>
<dbReference type="BioGRID" id="204869">
    <property type="interactions" value="2"/>
</dbReference>
<dbReference type="FunCoup" id="Q9Z131">
    <property type="interactions" value="1777"/>
</dbReference>
<dbReference type="IntAct" id="Q9Z131">
    <property type="interactions" value="1"/>
</dbReference>
<dbReference type="STRING" id="10090.ENSMUSP00000089517"/>
<dbReference type="GlyGen" id="Q9Z131">
    <property type="glycosylation" value="1 site"/>
</dbReference>
<dbReference type="iPTMnet" id="Q9Z131"/>
<dbReference type="PhosphoSitePlus" id="Q9Z131"/>
<dbReference type="PaxDb" id="10090-ENSMUSP00000089517"/>
<dbReference type="PeptideAtlas" id="Q9Z131"/>
<dbReference type="ProteomicsDB" id="285813">
    <molecule id="Q9Z131-1"/>
</dbReference>
<dbReference type="ProteomicsDB" id="285814">
    <molecule id="Q9Z131-2"/>
</dbReference>
<dbReference type="ProteomicsDB" id="285815">
    <molecule id="Q9Z131-3"/>
</dbReference>
<dbReference type="Pumba" id="Q9Z131"/>
<dbReference type="Antibodypedia" id="26718">
    <property type="antibodies" value="161 antibodies from 26 providers"/>
</dbReference>
<dbReference type="Ensembl" id="ENSMUST00000091903.5">
    <molecule id="Q9Z131-2"/>
    <property type="protein sequence ID" value="ENSMUSP00000089517.5"/>
    <property type="gene ID" value="ENSMUSG00000021892.15"/>
</dbReference>
<dbReference type="Ensembl" id="ENSMUST00000100730.10">
    <molecule id="Q9Z131-3"/>
    <property type="protein sequence ID" value="ENSMUSP00000098296.4"/>
    <property type="gene ID" value="ENSMUSG00000021892.15"/>
</dbReference>
<dbReference type="Ensembl" id="ENSMUST00000140002.8">
    <molecule id="Q9Z131-1"/>
    <property type="protein sequence ID" value="ENSMUSP00000117152.2"/>
    <property type="gene ID" value="ENSMUSG00000021892.15"/>
</dbReference>
<dbReference type="GeneID" id="24056"/>
<dbReference type="KEGG" id="mmu:24056"/>
<dbReference type="UCSC" id="uc007sxp.1">
    <molecule id="Q9Z131-2"/>
    <property type="organism name" value="mouse"/>
</dbReference>
<dbReference type="AGR" id="MGI:1344391"/>
<dbReference type="CTD" id="9467"/>
<dbReference type="MGI" id="MGI:1344391">
    <property type="gene designation" value="Sh3bp5"/>
</dbReference>
<dbReference type="VEuPathDB" id="HostDB:ENSMUSG00000021892"/>
<dbReference type="eggNOG" id="KOG2008">
    <property type="taxonomic scope" value="Eukaryota"/>
</dbReference>
<dbReference type="GeneTree" id="ENSGT00390000018500"/>
<dbReference type="HOGENOM" id="CLU_048895_1_0_1"/>
<dbReference type="InParanoid" id="Q9Z131"/>
<dbReference type="OMA" id="ECFDDEP"/>
<dbReference type="OrthoDB" id="446789at2759"/>
<dbReference type="PhylomeDB" id="Q9Z131"/>
<dbReference type="TreeFam" id="TF105573"/>
<dbReference type="BioGRID-ORCS" id="24056">
    <property type="hits" value="2 hits in 79 CRISPR screens"/>
</dbReference>
<dbReference type="ChiTaRS" id="Sh3bp5">
    <property type="organism name" value="mouse"/>
</dbReference>
<dbReference type="PRO" id="PR:Q9Z131"/>
<dbReference type="Proteomes" id="UP000000589">
    <property type="component" value="Chromosome 14"/>
</dbReference>
<dbReference type="RNAct" id="Q9Z131">
    <property type="molecule type" value="protein"/>
</dbReference>
<dbReference type="Bgee" id="ENSMUSG00000021892">
    <property type="expression patterns" value="Expressed in stroma of bone marrow and 248 other cell types or tissues"/>
</dbReference>
<dbReference type="GO" id="GO:0005737">
    <property type="term" value="C:cytoplasm"/>
    <property type="evidence" value="ECO:0000305"/>
    <property type="project" value="MGI"/>
</dbReference>
<dbReference type="GO" id="GO:0030659">
    <property type="term" value="C:cytoplasmic vesicle membrane"/>
    <property type="evidence" value="ECO:0007669"/>
    <property type="project" value="UniProtKB-SubCell"/>
</dbReference>
<dbReference type="GO" id="GO:0005739">
    <property type="term" value="C:mitochondrion"/>
    <property type="evidence" value="ECO:0007669"/>
    <property type="project" value="UniProtKB-SubCell"/>
</dbReference>
<dbReference type="GO" id="GO:0016604">
    <property type="term" value="C:nuclear body"/>
    <property type="evidence" value="ECO:0007669"/>
    <property type="project" value="Ensembl"/>
</dbReference>
<dbReference type="GO" id="GO:0005085">
    <property type="term" value="F:guanyl-nucleotide exchange factor activity"/>
    <property type="evidence" value="ECO:0000250"/>
    <property type="project" value="UniProtKB"/>
</dbReference>
<dbReference type="GO" id="GO:0004860">
    <property type="term" value="F:protein kinase inhibitor activity"/>
    <property type="evidence" value="ECO:0000266"/>
    <property type="project" value="MGI"/>
</dbReference>
<dbReference type="GO" id="GO:0017124">
    <property type="term" value="F:SH3 domain binding"/>
    <property type="evidence" value="ECO:0000304"/>
    <property type="project" value="UniProtKB"/>
</dbReference>
<dbReference type="GO" id="GO:0035556">
    <property type="term" value="P:intracellular signal transduction"/>
    <property type="evidence" value="ECO:0000266"/>
    <property type="project" value="MGI"/>
</dbReference>
<dbReference type="GO" id="GO:0006469">
    <property type="term" value="P:negative regulation of protein kinase activity"/>
    <property type="evidence" value="ECO:0000314"/>
    <property type="project" value="UniProtKB"/>
</dbReference>
<dbReference type="InterPro" id="IPR007940">
    <property type="entry name" value="SH3BP5"/>
</dbReference>
<dbReference type="PANTHER" id="PTHR19423">
    <property type="entry name" value="SH3 DOMAIN-BINDING PROTEIN 5"/>
    <property type="match status" value="1"/>
</dbReference>
<dbReference type="PANTHER" id="PTHR19423:SF1">
    <property type="entry name" value="SH3 DOMAIN-BINDING PROTEIN 5"/>
    <property type="match status" value="1"/>
</dbReference>
<dbReference type="Pfam" id="PF05276">
    <property type="entry name" value="SH3BP5"/>
    <property type="match status" value="1"/>
</dbReference>
<comment type="function">
    <text evidence="1 4">Functions as a guanine nucleotide exchange factor (GEF) with specificity for RAB11A and RAB25 (By similarity). Inhibits the auto- and transphosphorylation activity of BTK. Plays a negative regulatory role in BTK-related cytoplasmic signaling in B-cells. May be involved in BCR-induced apoptotic cell death.</text>
</comment>
<comment type="subunit">
    <text evidence="1 5">Interacts with BTK (By similarity). Interacts with all isoforms of MAPK8, MAPK9, MAPK10 and MAPK12 (By similarity). Interacts with GDP-bound and nucleotide-free forms of RAB11A (PubMed:26506309).</text>
</comment>
<comment type="subcellular location">
    <subcellularLocation>
        <location evidence="1">Cytoplasmic vesicle membrane</location>
        <topology evidence="1">Peripheral membrane protein</topology>
    </subcellularLocation>
    <subcellularLocation>
        <location evidence="1">Mitochondrion</location>
    </subcellularLocation>
    <text evidence="1">Colocalizes with RAB11A on cytoplasmic vesicle membranes.</text>
</comment>
<comment type="alternative products">
    <event type="alternative splicing"/>
    <isoform>
        <id>Q9Z131-1</id>
        <name>1</name>
        <sequence type="displayed"/>
    </isoform>
    <isoform>
        <id>Q9Z131-2</id>
        <name>2</name>
        <sequence type="described" ref="VSP_010882"/>
    </isoform>
    <isoform>
        <id>Q9Z131-3</id>
        <name>3</name>
        <sequence type="described" ref="VSP_022572 VSP_010882"/>
    </isoform>
</comment>
<comment type="domain">
    <text evidence="1">The N-terminal half of the protein mediates interaction with RAB11A and functions as a guanine nucleotide exchange factor. Four long alpha-helices (interrupted by a central kink) assemble into coiled coils, giving rise to a 'V' shape.</text>
</comment>
<comment type="similarity">
    <text evidence="9">Belongs to the SH3BP5 family.</text>
</comment>
<comment type="sequence caution" evidence="9">
    <conflict type="erroneous initiation">
        <sequence resource="EMBL-CDS" id="BAC31530"/>
    </conflict>
</comment>
<sequence length="463" mass="51807">MDTALKRSRSDEPAELPPPAREVEEKEEEEERMEQGLEEEEEEVDPRIQGELEKLNQSTDDINRRETELEDARQKFRSVLVEATVKLDELAKKIGKAVEDSKPYWEARRVARQAQLEAQKATQDFQRATEVLRAAKETISLAEQRLLEDDKRQFDSAWQEMLNHATQRVMEAEQTKTRSELVHKETAARYNAAMGRMRQLEKKLKRAINKSKPYFELKAKYYVQLEQLKKTVDDLQAKLALAKGEYKAALKSLERISDEIHERRRSNAMGPRGCGVGAEGSIASVENLPVSKPEPDAISVASEAFEDDNCSNLVSEDDSETQSVSSFSSGPTSPSEMPDQFPAVARPGSLDLPSPVSLSEFGMMFPILGPRSECSGASSPECEVERGDRAEGAENKMSDKANNNRVLGSTNGGSGRSRSQSSTSLESQALETRMKQLSLQCSKGRDGIIADIKMIFIFYTFLQ</sequence>
<organism>
    <name type="scientific">Mus musculus</name>
    <name type="common">Mouse</name>
    <dbReference type="NCBI Taxonomy" id="10090"/>
    <lineage>
        <taxon>Eukaryota</taxon>
        <taxon>Metazoa</taxon>
        <taxon>Chordata</taxon>
        <taxon>Craniata</taxon>
        <taxon>Vertebrata</taxon>
        <taxon>Euteleostomi</taxon>
        <taxon>Mammalia</taxon>
        <taxon>Eutheria</taxon>
        <taxon>Euarchontoglires</taxon>
        <taxon>Glires</taxon>
        <taxon>Rodentia</taxon>
        <taxon>Myomorpha</taxon>
        <taxon>Muroidea</taxon>
        <taxon>Muridae</taxon>
        <taxon>Murinae</taxon>
        <taxon>Mus</taxon>
        <taxon>Mus</taxon>
    </lineage>
</organism>
<gene>
    <name type="primary">Sh3bp5</name>
    <name evidence="6" type="synonym">Sab</name>
</gene>
<keyword id="KW-0025">Alternative splicing</keyword>
<keyword id="KW-0175">Coiled coil</keyword>
<keyword id="KW-0968">Cytoplasmic vesicle</keyword>
<keyword id="KW-0903">Direct protein sequencing</keyword>
<keyword id="KW-0344">Guanine-nucleotide releasing factor</keyword>
<keyword id="KW-0472">Membrane</keyword>
<keyword id="KW-0496">Mitochondrion</keyword>
<keyword id="KW-0597">Phosphoprotein</keyword>
<keyword id="KW-1185">Reference proteome</keyword>
<keyword id="KW-0729">SH3-binding</keyword>
<reference key="1">
    <citation type="journal article" date="2005" name="Science">
        <title>The transcriptional landscape of the mammalian genome.</title>
        <authorList>
            <person name="Carninci P."/>
            <person name="Kasukawa T."/>
            <person name="Katayama S."/>
            <person name="Gough J."/>
            <person name="Frith M.C."/>
            <person name="Maeda N."/>
            <person name="Oyama R."/>
            <person name="Ravasi T."/>
            <person name="Lenhard B."/>
            <person name="Wells C."/>
            <person name="Kodzius R."/>
            <person name="Shimokawa K."/>
            <person name="Bajic V.B."/>
            <person name="Brenner S.E."/>
            <person name="Batalov S."/>
            <person name="Forrest A.R."/>
            <person name="Zavolan M."/>
            <person name="Davis M.J."/>
            <person name="Wilming L.G."/>
            <person name="Aidinis V."/>
            <person name="Allen J.E."/>
            <person name="Ambesi-Impiombato A."/>
            <person name="Apweiler R."/>
            <person name="Aturaliya R.N."/>
            <person name="Bailey T.L."/>
            <person name="Bansal M."/>
            <person name="Baxter L."/>
            <person name="Beisel K.W."/>
            <person name="Bersano T."/>
            <person name="Bono H."/>
            <person name="Chalk A.M."/>
            <person name="Chiu K.P."/>
            <person name="Choudhary V."/>
            <person name="Christoffels A."/>
            <person name="Clutterbuck D.R."/>
            <person name="Crowe M.L."/>
            <person name="Dalla E."/>
            <person name="Dalrymple B.P."/>
            <person name="de Bono B."/>
            <person name="Della Gatta G."/>
            <person name="di Bernardo D."/>
            <person name="Down T."/>
            <person name="Engstrom P."/>
            <person name="Fagiolini M."/>
            <person name="Faulkner G."/>
            <person name="Fletcher C.F."/>
            <person name="Fukushima T."/>
            <person name="Furuno M."/>
            <person name="Futaki S."/>
            <person name="Gariboldi M."/>
            <person name="Georgii-Hemming P."/>
            <person name="Gingeras T.R."/>
            <person name="Gojobori T."/>
            <person name="Green R.E."/>
            <person name="Gustincich S."/>
            <person name="Harbers M."/>
            <person name="Hayashi Y."/>
            <person name="Hensch T.K."/>
            <person name="Hirokawa N."/>
            <person name="Hill D."/>
            <person name="Huminiecki L."/>
            <person name="Iacono M."/>
            <person name="Ikeo K."/>
            <person name="Iwama A."/>
            <person name="Ishikawa T."/>
            <person name="Jakt M."/>
            <person name="Kanapin A."/>
            <person name="Katoh M."/>
            <person name="Kawasawa Y."/>
            <person name="Kelso J."/>
            <person name="Kitamura H."/>
            <person name="Kitano H."/>
            <person name="Kollias G."/>
            <person name="Krishnan S.P."/>
            <person name="Kruger A."/>
            <person name="Kummerfeld S.K."/>
            <person name="Kurochkin I.V."/>
            <person name="Lareau L.F."/>
            <person name="Lazarevic D."/>
            <person name="Lipovich L."/>
            <person name="Liu J."/>
            <person name="Liuni S."/>
            <person name="McWilliam S."/>
            <person name="Madan Babu M."/>
            <person name="Madera M."/>
            <person name="Marchionni L."/>
            <person name="Matsuda H."/>
            <person name="Matsuzawa S."/>
            <person name="Miki H."/>
            <person name="Mignone F."/>
            <person name="Miyake S."/>
            <person name="Morris K."/>
            <person name="Mottagui-Tabar S."/>
            <person name="Mulder N."/>
            <person name="Nakano N."/>
            <person name="Nakauchi H."/>
            <person name="Ng P."/>
            <person name="Nilsson R."/>
            <person name="Nishiguchi S."/>
            <person name="Nishikawa S."/>
            <person name="Nori F."/>
            <person name="Ohara O."/>
            <person name="Okazaki Y."/>
            <person name="Orlando V."/>
            <person name="Pang K.C."/>
            <person name="Pavan W.J."/>
            <person name="Pavesi G."/>
            <person name="Pesole G."/>
            <person name="Petrovsky N."/>
            <person name="Piazza S."/>
            <person name="Reed J."/>
            <person name="Reid J.F."/>
            <person name="Ring B.Z."/>
            <person name="Ringwald M."/>
            <person name="Rost B."/>
            <person name="Ruan Y."/>
            <person name="Salzberg S.L."/>
            <person name="Sandelin A."/>
            <person name="Schneider C."/>
            <person name="Schoenbach C."/>
            <person name="Sekiguchi K."/>
            <person name="Semple C.A."/>
            <person name="Seno S."/>
            <person name="Sessa L."/>
            <person name="Sheng Y."/>
            <person name="Shibata Y."/>
            <person name="Shimada H."/>
            <person name="Shimada K."/>
            <person name="Silva D."/>
            <person name="Sinclair B."/>
            <person name="Sperling S."/>
            <person name="Stupka E."/>
            <person name="Sugiura K."/>
            <person name="Sultana R."/>
            <person name="Takenaka Y."/>
            <person name="Taki K."/>
            <person name="Tammoja K."/>
            <person name="Tan S.L."/>
            <person name="Tang S."/>
            <person name="Taylor M.S."/>
            <person name="Tegner J."/>
            <person name="Teichmann S.A."/>
            <person name="Ueda H.R."/>
            <person name="van Nimwegen E."/>
            <person name="Verardo R."/>
            <person name="Wei C.L."/>
            <person name="Yagi K."/>
            <person name="Yamanishi H."/>
            <person name="Zabarovsky E."/>
            <person name="Zhu S."/>
            <person name="Zimmer A."/>
            <person name="Hide W."/>
            <person name="Bult C."/>
            <person name="Grimmond S.M."/>
            <person name="Teasdale R.D."/>
            <person name="Liu E.T."/>
            <person name="Brusic V."/>
            <person name="Quackenbush J."/>
            <person name="Wahlestedt C."/>
            <person name="Mattick J.S."/>
            <person name="Hume D.A."/>
            <person name="Kai C."/>
            <person name="Sasaki D."/>
            <person name="Tomaru Y."/>
            <person name="Fukuda S."/>
            <person name="Kanamori-Katayama M."/>
            <person name="Suzuki M."/>
            <person name="Aoki J."/>
            <person name="Arakawa T."/>
            <person name="Iida J."/>
            <person name="Imamura K."/>
            <person name="Itoh M."/>
            <person name="Kato T."/>
            <person name="Kawaji H."/>
            <person name="Kawagashira N."/>
            <person name="Kawashima T."/>
            <person name="Kojima M."/>
            <person name="Kondo S."/>
            <person name="Konno H."/>
            <person name="Nakano K."/>
            <person name="Ninomiya N."/>
            <person name="Nishio T."/>
            <person name="Okada M."/>
            <person name="Plessy C."/>
            <person name="Shibata K."/>
            <person name="Shiraki T."/>
            <person name="Suzuki S."/>
            <person name="Tagami M."/>
            <person name="Waki K."/>
            <person name="Watahiki A."/>
            <person name="Okamura-Oho Y."/>
            <person name="Suzuki H."/>
            <person name="Kawai J."/>
            <person name="Hayashizaki Y."/>
        </authorList>
    </citation>
    <scope>NUCLEOTIDE SEQUENCE [LARGE SCALE MRNA] (ISOFORMS 1 AND 2)</scope>
    <source>
        <strain>C57BL/6J</strain>
        <tissue>Cerebellum</tissue>
        <tissue>Testis</tissue>
    </source>
</reference>
<reference key="2">
    <citation type="journal article" date="2004" name="Genome Res.">
        <title>The status, quality, and expansion of the NIH full-length cDNA project: the Mammalian Gene Collection (MGC).</title>
        <authorList>
            <consortium name="The MGC Project Team"/>
        </authorList>
    </citation>
    <scope>NUCLEOTIDE SEQUENCE [LARGE SCALE MRNA] (ISOFORM 2)</scope>
    <source>
        <tissue>Embryo</tissue>
        <tissue>Mammary gland</tissue>
    </source>
</reference>
<reference key="3">
    <citation type="submission" date="2007-04" db="UniProtKB">
        <authorList>
            <person name="Lubec G."/>
            <person name="Kang S.U."/>
        </authorList>
    </citation>
    <scope>PROTEIN SEQUENCE OF 16-22</scope>
    <scope>IDENTIFICATION BY MASS SPECTROMETRY</scope>
    <source>
        <strain>C57BL/6J</strain>
        <tissue>Brain</tissue>
    </source>
</reference>
<reference key="4">
    <citation type="journal article" date="1999" name="Proc. Natl. Acad. Sci. U.S.A.">
        <title>Bruton's tyrosine kinase activity is negatively regulated by Sab, the Btk-SH3 domain-binding protein.</title>
        <authorList>
            <person name="Yamadori T."/>
            <person name="Baba Y."/>
            <person name="Mastushita M."/>
            <person name="Hashimoto S."/>
            <person name="Kurosaki M."/>
            <person name="Kurosaki T."/>
            <person name="Kishimoto T."/>
            <person name="Tsukada S."/>
        </authorList>
    </citation>
    <scope>NUCLEOTIDE SEQUENCE [MRNA] OF 33-458 (ISOFORM 2)</scope>
    <scope>FUNCTION</scope>
    <source>
        <strain>C57BL/6J</strain>
        <tissue>Spleen</tissue>
    </source>
</reference>
<reference key="5">
    <citation type="journal article" date="2007" name="Proc. Natl. Acad. Sci. U.S.A.">
        <title>Large-scale phosphorylation analysis of mouse liver.</title>
        <authorList>
            <person name="Villen J."/>
            <person name="Beausoleil S.A."/>
            <person name="Gerber S.A."/>
            <person name="Gygi S.P."/>
        </authorList>
    </citation>
    <scope>IDENTIFICATION BY MASS SPECTROMETRY [LARGE SCALE ANALYSIS]</scope>
    <source>
        <tissue>Liver</tissue>
    </source>
</reference>
<reference key="6">
    <citation type="journal article" date="2010" name="Cell">
        <title>A tissue-specific atlas of mouse protein phosphorylation and expression.</title>
        <authorList>
            <person name="Huttlin E.L."/>
            <person name="Jedrychowski M.P."/>
            <person name="Elias J.E."/>
            <person name="Goswami T."/>
            <person name="Rad R."/>
            <person name="Beausoleil S.A."/>
            <person name="Villen J."/>
            <person name="Haas W."/>
            <person name="Sowa M.E."/>
            <person name="Gygi S.P."/>
        </authorList>
    </citation>
    <scope>PHOSPHORYLATION [LARGE SCALE ANALYSIS] AT SER-378; SER-379 AND SER-424</scope>
    <scope>IDENTIFICATION BY MASS SPECTROMETRY [LARGE SCALE ANALYSIS]</scope>
    <source>
        <tissue>Kidney</tissue>
        <tissue>Liver</tissue>
        <tissue>Lung</tissue>
        <tissue>Spleen</tissue>
    </source>
</reference>
<reference key="7">
    <citation type="journal article" date="2015" name="Dev. Cell">
        <title>REI-1 is a guanine nucleotide exchange factor regulating RAB-11 localization and function in C. elegans embryos.</title>
        <authorList>
            <person name="Sakaguchi A."/>
            <person name="Sato M."/>
            <person name="Sato K."/>
            <person name="Gengyo-Ando K."/>
            <person name="Yorimitsu T."/>
            <person name="Nakai J."/>
            <person name="Hara T."/>
            <person name="Sato K."/>
            <person name="Sato K."/>
        </authorList>
    </citation>
    <scope>INTERACTION WITH RAB11A</scope>
</reference>
<protein>
    <recommendedName>
        <fullName>SH3 domain-binding protein 5</fullName>
        <shortName>SH3BP-5</shortName>
    </recommendedName>
    <alternativeName>
        <fullName>SH3 domain-binding protein that preferentially associates with BTK</fullName>
    </alternativeName>
</protein>
<name>3BP5_MOUSE</name>
<evidence type="ECO:0000250" key="1">
    <source>
        <dbReference type="UniProtKB" id="O60239"/>
    </source>
</evidence>
<evidence type="ECO:0000250" key="2">
    <source>
        <dbReference type="UniProtKB" id="Q91Y80"/>
    </source>
</evidence>
<evidence type="ECO:0000256" key="3">
    <source>
        <dbReference type="SAM" id="MobiDB-lite"/>
    </source>
</evidence>
<evidence type="ECO:0000269" key="4">
    <source>
    </source>
</evidence>
<evidence type="ECO:0000269" key="5">
    <source>
    </source>
</evidence>
<evidence type="ECO:0000303" key="6">
    <source>
    </source>
</evidence>
<evidence type="ECO:0000303" key="7">
    <source>
    </source>
</evidence>
<evidence type="ECO:0000303" key="8">
    <source>
    </source>
</evidence>
<evidence type="ECO:0000305" key="9"/>
<evidence type="ECO:0007744" key="10">
    <source>
    </source>
</evidence>
<accession>Q9Z131</accession>
<accession>Q3TTD6</accession>
<accession>Q8C903</accession>
<accession>Q8VCZ0</accession>